<organism>
    <name type="scientific">Rhodopseudomonas palustris (strain HaA2)</name>
    <dbReference type="NCBI Taxonomy" id="316058"/>
    <lineage>
        <taxon>Bacteria</taxon>
        <taxon>Pseudomonadati</taxon>
        <taxon>Pseudomonadota</taxon>
        <taxon>Alphaproteobacteria</taxon>
        <taxon>Hyphomicrobiales</taxon>
        <taxon>Nitrobacteraceae</taxon>
        <taxon>Rhodopseudomonas</taxon>
    </lineage>
</organism>
<keyword id="KW-0963">Cytoplasm</keyword>
<keyword id="KW-0342">GTP-binding</keyword>
<keyword id="KW-0378">Hydrolase</keyword>
<keyword id="KW-0460">Magnesium</keyword>
<keyword id="KW-0479">Metal-binding</keyword>
<keyword id="KW-0547">Nucleotide-binding</keyword>
<keyword id="KW-0630">Potassium</keyword>
<keyword id="KW-1185">Reference proteome</keyword>
<keyword id="KW-0819">tRNA processing</keyword>
<proteinExistence type="inferred from homology"/>
<reference key="1">
    <citation type="submission" date="2006-01" db="EMBL/GenBank/DDBJ databases">
        <title>Complete sequence of Rhodopseudomonas palustris HaA2.</title>
        <authorList>
            <consortium name="US DOE Joint Genome Institute"/>
            <person name="Copeland A."/>
            <person name="Lucas S."/>
            <person name="Lapidus A."/>
            <person name="Barry K."/>
            <person name="Detter J.C."/>
            <person name="Glavina T."/>
            <person name="Hammon N."/>
            <person name="Israni S."/>
            <person name="Pitluck S."/>
            <person name="Chain P."/>
            <person name="Malfatti S."/>
            <person name="Shin M."/>
            <person name="Vergez L."/>
            <person name="Schmutz J."/>
            <person name="Larimer F."/>
            <person name="Land M."/>
            <person name="Hauser L."/>
            <person name="Pelletier D.A."/>
            <person name="Kyrpides N."/>
            <person name="Anderson I."/>
            <person name="Oda Y."/>
            <person name="Harwood C.S."/>
            <person name="Richardson P."/>
        </authorList>
    </citation>
    <scope>NUCLEOTIDE SEQUENCE [LARGE SCALE GENOMIC DNA]</scope>
    <source>
        <strain>HaA2</strain>
    </source>
</reference>
<gene>
    <name evidence="1" type="primary">mnmE</name>
    <name evidence="1" type="synonym">trmE</name>
    <name type="ordered locus">RPB_0392</name>
</gene>
<accession>Q2J357</accession>
<protein>
    <recommendedName>
        <fullName evidence="1">tRNA modification GTPase MnmE</fullName>
        <ecNumber evidence="1">3.6.-.-</ecNumber>
    </recommendedName>
</protein>
<dbReference type="EC" id="3.6.-.-" evidence="1"/>
<dbReference type="EMBL" id="CP000250">
    <property type="protein sequence ID" value="ABD05103.1"/>
    <property type="molecule type" value="Genomic_DNA"/>
</dbReference>
<dbReference type="RefSeq" id="WP_011439293.1">
    <property type="nucleotide sequence ID" value="NC_007778.1"/>
</dbReference>
<dbReference type="SMR" id="Q2J357"/>
<dbReference type="STRING" id="316058.RPB_0392"/>
<dbReference type="KEGG" id="rpb:RPB_0392"/>
<dbReference type="eggNOG" id="COG0486">
    <property type="taxonomic scope" value="Bacteria"/>
</dbReference>
<dbReference type="HOGENOM" id="CLU_019624_3_1_5"/>
<dbReference type="OrthoDB" id="9805918at2"/>
<dbReference type="Proteomes" id="UP000008809">
    <property type="component" value="Chromosome"/>
</dbReference>
<dbReference type="GO" id="GO:0005737">
    <property type="term" value="C:cytoplasm"/>
    <property type="evidence" value="ECO:0007669"/>
    <property type="project" value="UniProtKB-SubCell"/>
</dbReference>
<dbReference type="GO" id="GO:0005525">
    <property type="term" value="F:GTP binding"/>
    <property type="evidence" value="ECO:0007669"/>
    <property type="project" value="UniProtKB-UniRule"/>
</dbReference>
<dbReference type="GO" id="GO:0003924">
    <property type="term" value="F:GTPase activity"/>
    <property type="evidence" value="ECO:0007669"/>
    <property type="project" value="UniProtKB-UniRule"/>
</dbReference>
<dbReference type="GO" id="GO:0046872">
    <property type="term" value="F:metal ion binding"/>
    <property type="evidence" value="ECO:0007669"/>
    <property type="project" value="UniProtKB-KW"/>
</dbReference>
<dbReference type="GO" id="GO:0030488">
    <property type="term" value="P:tRNA methylation"/>
    <property type="evidence" value="ECO:0007669"/>
    <property type="project" value="TreeGrafter"/>
</dbReference>
<dbReference type="GO" id="GO:0002098">
    <property type="term" value="P:tRNA wobble uridine modification"/>
    <property type="evidence" value="ECO:0007669"/>
    <property type="project" value="TreeGrafter"/>
</dbReference>
<dbReference type="CDD" id="cd04164">
    <property type="entry name" value="trmE"/>
    <property type="match status" value="1"/>
</dbReference>
<dbReference type="CDD" id="cd14858">
    <property type="entry name" value="TrmE_N"/>
    <property type="match status" value="1"/>
</dbReference>
<dbReference type="FunFam" id="3.30.1360.120:FF:000007">
    <property type="entry name" value="tRNA modification GTPase GTPBP3, mitochondrial"/>
    <property type="match status" value="1"/>
</dbReference>
<dbReference type="Gene3D" id="3.40.50.300">
    <property type="entry name" value="P-loop containing nucleotide triphosphate hydrolases"/>
    <property type="match status" value="1"/>
</dbReference>
<dbReference type="Gene3D" id="3.30.1360.120">
    <property type="entry name" value="Probable tRNA modification gtpase trme, domain 1"/>
    <property type="match status" value="1"/>
</dbReference>
<dbReference type="Gene3D" id="1.20.120.430">
    <property type="entry name" value="tRNA modification GTPase MnmE domain 2"/>
    <property type="match status" value="1"/>
</dbReference>
<dbReference type="HAMAP" id="MF_00379">
    <property type="entry name" value="GTPase_MnmE"/>
    <property type="match status" value="1"/>
</dbReference>
<dbReference type="InterPro" id="IPR031168">
    <property type="entry name" value="G_TrmE"/>
</dbReference>
<dbReference type="InterPro" id="IPR006073">
    <property type="entry name" value="GTP-bd"/>
</dbReference>
<dbReference type="InterPro" id="IPR018948">
    <property type="entry name" value="GTP-bd_TrmE_N"/>
</dbReference>
<dbReference type="InterPro" id="IPR004520">
    <property type="entry name" value="GTPase_MnmE"/>
</dbReference>
<dbReference type="InterPro" id="IPR027368">
    <property type="entry name" value="MnmE_dom2"/>
</dbReference>
<dbReference type="InterPro" id="IPR025867">
    <property type="entry name" value="MnmE_helical"/>
</dbReference>
<dbReference type="InterPro" id="IPR027417">
    <property type="entry name" value="P-loop_NTPase"/>
</dbReference>
<dbReference type="InterPro" id="IPR005225">
    <property type="entry name" value="Small_GTP-bd"/>
</dbReference>
<dbReference type="InterPro" id="IPR027266">
    <property type="entry name" value="TrmE/GcvT_dom1"/>
</dbReference>
<dbReference type="NCBIfam" id="TIGR00450">
    <property type="entry name" value="mnmE_trmE_thdF"/>
    <property type="match status" value="1"/>
</dbReference>
<dbReference type="NCBIfam" id="NF003661">
    <property type="entry name" value="PRK05291.1-3"/>
    <property type="match status" value="1"/>
</dbReference>
<dbReference type="NCBIfam" id="TIGR00231">
    <property type="entry name" value="small_GTP"/>
    <property type="match status" value="1"/>
</dbReference>
<dbReference type="PANTHER" id="PTHR42714">
    <property type="entry name" value="TRNA MODIFICATION GTPASE GTPBP3"/>
    <property type="match status" value="1"/>
</dbReference>
<dbReference type="PANTHER" id="PTHR42714:SF2">
    <property type="entry name" value="TRNA MODIFICATION GTPASE GTPBP3, MITOCHONDRIAL"/>
    <property type="match status" value="1"/>
</dbReference>
<dbReference type="Pfam" id="PF01926">
    <property type="entry name" value="MMR_HSR1"/>
    <property type="match status" value="1"/>
</dbReference>
<dbReference type="Pfam" id="PF12631">
    <property type="entry name" value="MnmE_helical"/>
    <property type="match status" value="1"/>
</dbReference>
<dbReference type="Pfam" id="PF10396">
    <property type="entry name" value="TrmE_N"/>
    <property type="match status" value="1"/>
</dbReference>
<dbReference type="SUPFAM" id="SSF52540">
    <property type="entry name" value="P-loop containing nucleoside triphosphate hydrolases"/>
    <property type="match status" value="1"/>
</dbReference>
<dbReference type="SUPFAM" id="SSF116878">
    <property type="entry name" value="TrmE connector domain"/>
    <property type="match status" value="1"/>
</dbReference>
<dbReference type="PROSITE" id="PS51709">
    <property type="entry name" value="G_TRME"/>
    <property type="match status" value="1"/>
</dbReference>
<feature type="chain" id="PRO_0000345894" description="tRNA modification GTPase MnmE">
    <location>
        <begin position="1"/>
        <end position="460"/>
    </location>
</feature>
<feature type="domain" description="TrmE-type G">
    <location>
        <begin position="218"/>
        <end position="384"/>
    </location>
</feature>
<feature type="binding site" evidence="1">
    <location>
        <position position="24"/>
    </location>
    <ligand>
        <name>(6S)-5-formyl-5,6,7,8-tetrahydrofolate</name>
        <dbReference type="ChEBI" id="CHEBI:57457"/>
    </ligand>
</feature>
<feature type="binding site" evidence="1">
    <location>
        <position position="81"/>
    </location>
    <ligand>
        <name>(6S)-5-formyl-5,6,7,8-tetrahydrofolate</name>
        <dbReference type="ChEBI" id="CHEBI:57457"/>
    </ligand>
</feature>
<feature type="binding site" evidence="1">
    <location>
        <position position="121"/>
    </location>
    <ligand>
        <name>(6S)-5-formyl-5,6,7,8-tetrahydrofolate</name>
        <dbReference type="ChEBI" id="CHEBI:57457"/>
    </ligand>
</feature>
<feature type="binding site" evidence="1">
    <location>
        <begin position="228"/>
        <end position="233"/>
    </location>
    <ligand>
        <name>GTP</name>
        <dbReference type="ChEBI" id="CHEBI:37565"/>
    </ligand>
</feature>
<feature type="binding site" evidence="1">
    <location>
        <position position="232"/>
    </location>
    <ligand>
        <name>Mg(2+)</name>
        <dbReference type="ChEBI" id="CHEBI:18420"/>
    </ligand>
</feature>
<feature type="binding site" evidence="1">
    <location>
        <begin position="247"/>
        <end position="253"/>
    </location>
    <ligand>
        <name>GTP</name>
        <dbReference type="ChEBI" id="CHEBI:37565"/>
    </ligand>
</feature>
<feature type="binding site" evidence="1">
    <location>
        <position position="253"/>
    </location>
    <ligand>
        <name>Mg(2+)</name>
        <dbReference type="ChEBI" id="CHEBI:18420"/>
    </ligand>
</feature>
<feature type="binding site" evidence="1">
    <location>
        <begin position="272"/>
        <end position="275"/>
    </location>
    <ligand>
        <name>GTP</name>
        <dbReference type="ChEBI" id="CHEBI:37565"/>
    </ligand>
</feature>
<feature type="binding site" evidence="1">
    <location>
        <position position="460"/>
    </location>
    <ligand>
        <name>(6S)-5-formyl-5,6,7,8-tetrahydrofolate</name>
        <dbReference type="ChEBI" id="CHEBI:57457"/>
    </ligand>
</feature>
<comment type="function">
    <text evidence="1">Exhibits a very high intrinsic GTPase hydrolysis rate. Involved in the addition of a carboxymethylaminomethyl (cmnm) group at the wobble position (U34) of certain tRNAs, forming tRNA-cmnm(5)s(2)U34.</text>
</comment>
<comment type="cofactor">
    <cofactor evidence="1">
        <name>K(+)</name>
        <dbReference type="ChEBI" id="CHEBI:29103"/>
    </cofactor>
    <text evidence="1">Binds 1 potassium ion per subunit.</text>
</comment>
<comment type="subunit">
    <text evidence="1">Homodimer. Heterotetramer of two MnmE and two MnmG subunits.</text>
</comment>
<comment type="subcellular location">
    <subcellularLocation>
        <location evidence="1">Cytoplasm</location>
    </subcellularLocation>
</comment>
<comment type="similarity">
    <text evidence="1">Belongs to the TRAFAC class TrmE-Era-EngA-EngB-Septin-like GTPase superfamily. TrmE GTPase family.</text>
</comment>
<name>MNME_RHOP2</name>
<evidence type="ECO:0000255" key="1">
    <source>
        <dbReference type="HAMAP-Rule" id="MF_00379"/>
    </source>
</evidence>
<sequence>MHPNDQTIFALASGRLPSALAIVRVSGARARDVLAALTGALPPPRTVRRVRIRDVNHELIDDAVVLWFAAPASATGEDVAEFHIHGGRAVLAALVKALASFDDVRPAEPGEFTRRAFENGKLDLTEAEGLDDLIHADTEAQRRLAVRQLGGLLGDRARRWRAQIIEALALIEAGIDFADEGDVQGELMAPALRTIATLHGEIAEVLAAQGKSERLRDGLVVAIAGPPNVGKSTLINRLARREVAIVSPHAGTTRDVIEVQLDLGGYPVTLIDTAGIRESEDSVEQEGVRRAKARAAEADLVLWLGADEAIDVAVEGSAPVWRVRNKIDLVPQADTVGADSGGAGLAANLWQTEGNVAAREAFGISAKRGDGVGDMVEALAGFAAQYFAASGEAAVISRERHRLLLQQAEVMLRCSMTVGLAPELVAEELRLAAGALGRLLGRVDVEDVLGEIFGRFCIGK</sequence>